<dbReference type="EC" id="3.4.-.-"/>
<dbReference type="EMBL" id="DT656838">
    <property type="status" value="NOT_ANNOTATED_CDS"/>
    <property type="molecule type" value="mRNA"/>
</dbReference>
<dbReference type="EMBL" id="BU266437">
    <property type="status" value="NOT_ANNOTATED_CDS"/>
    <property type="molecule type" value="mRNA"/>
</dbReference>
<dbReference type="RefSeq" id="NP_001292019.1">
    <property type="nucleotide sequence ID" value="NM_001305090.2"/>
</dbReference>
<dbReference type="SMR" id="P0DJJ2"/>
<dbReference type="FunCoup" id="P0DJJ2">
    <property type="interactions" value="5"/>
</dbReference>
<dbReference type="STRING" id="9031.ENSGALP00000046927"/>
<dbReference type="PaxDb" id="9031-ENSGALP00000013074"/>
<dbReference type="GeneID" id="423176"/>
<dbReference type="KEGG" id="gga:423176"/>
<dbReference type="VEuPathDB" id="HostDB:geneid_423176"/>
<dbReference type="eggNOG" id="KOG3714">
    <property type="taxonomic scope" value="Eukaryota"/>
</dbReference>
<dbReference type="HOGENOM" id="CLU_005140_1_0_1"/>
<dbReference type="InParanoid" id="P0DJJ2"/>
<dbReference type="OrthoDB" id="291007at2759"/>
<dbReference type="PRO" id="PR:P0DJJ2"/>
<dbReference type="Proteomes" id="UP000000539">
    <property type="component" value="Chromosome 5"/>
</dbReference>
<dbReference type="GO" id="GO:0060473">
    <property type="term" value="C:cortical granule"/>
    <property type="evidence" value="ECO:0000250"/>
    <property type="project" value="UniProtKB"/>
</dbReference>
<dbReference type="GO" id="GO:0005737">
    <property type="term" value="C:cytoplasm"/>
    <property type="evidence" value="ECO:0000250"/>
    <property type="project" value="UniProtKB"/>
</dbReference>
<dbReference type="GO" id="GO:0005886">
    <property type="term" value="C:plasma membrane"/>
    <property type="evidence" value="ECO:0000250"/>
    <property type="project" value="UniProtKB"/>
</dbReference>
<dbReference type="GO" id="GO:0070001">
    <property type="term" value="F:aspartic-type peptidase activity"/>
    <property type="evidence" value="ECO:0000250"/>
    <property type="project" value="UniProtKB"/>
</dbReference>
<dbReference type="GO" id="GO:0070002">
    <property type="term" value="F:glutamic-type peptidase activity"/>
    <property type="evidence" value="ECO:0000250"/>
    <property type="project" value="UniProtKB"/>
</dbReference>
<dbReference type="GO" id="GO:0004222">
    <property type="term" value="F:metalloendopeptidase activity"/>
    <property type="evidence" value="ECO:0000318"/>
    <property type="project" value="GO_Central"/>
</dbReference>
<dbReference type="GO" id="GO:0008233">
    <property type="term" value="F:peptidase activity"/>
    <property type="evidence" value="ECO:0000250"/>
    <property type="project" value="UniProtKB"/>
</dbReference>
<dbReference type="GO" id="GO:0008270">
    <property type="term" value="F:zinc ion binding"/>
    <property type="evidence" value="ECO:0007669"/>
    <property type="project" value="InterPro"/>
</dbReference>
<dbReference type="GO" id="GO:0007155">
    <property type="term" value="P:cell adhesion"/>
    <property type="evidence" value="ECO:0000250"/>
    <property type="project" value="UniProtKB"/>
</dbReference>
<dbReference type="GO" id="GO:0009566">
    <property type="term" value="P:fertilization"/>
    <property type="evidence" value="ECO:0000250"/>
    <property type="project" value="UniProtKB"/>
</dbReference>
<dbReference type="GO" id="GO:2000360">
    <property type="term" value="P:negative regulation of binding of sperm to zona pellucida"/>
    <property type="evidence" value="ECO:0000250"/>
    <property type="project" value="UniProtKB"/>
</dbReference>
<dbReference type="GO" id="GO:0010954">
    <property type="term" value="P:positive regulation of protein processing"/>
    <property type="evidence" value="ECO:0000250"/>
    <property type="project" value="UniProtKB"/>
</dbReference>
<dbReference type="GO" id="GO:0060468">
    <property type="term" value="P:prevention of polyspermy"/>
    <property type="evidence" value="ECO:0000250"/>
    <property type="project" value="UniProtKB"/>
</dbReference>
<dbReference type="GO" id="GO:0006508">
    <property type="term" value="P:proteolysis"/>
    <property type="evidence" value="ECO:0007669"/>
    <property type="project" value="UniProtKB-KW"/>
</dbReference>
<dbReference type="CDD" id="cd00041">
    <property type="entry name" value="CUB"/>
    <property type="match status" value="1"/>
</dbReference>
<dbReference type="CDD" id="cd04283">
    <property type="entry name" value="ZnMc_hatching_enzyme"/>
    <property type="match status" value="1"/>
</dbReference>
<dbReference type="FunFam" id="3.40.390.10:FF:000040">
    <property type="entry name" value="Metalloendopeptidase"/>
    <property type="match status" value="1"/>
</dbReference>
<dbReference type="FunFam" id="2.60.120.290:FF:000005">
    <property type="entry name" value="Procollagen C-endopeptidase enhancer 1"/>
    <property type="match status" value="1"/>
</dbReference>
<dbReference type="Gene3D" id="3.40.390.10">
    <property type="entry name" value="Collagenase (Catalytic Domain)"/>
    <property type="match status" value="1"/>
</dbReference>
<dbReference type="Gene3D" id="2.60.120.290">
    <property type="entry name" value="Spermadhesin, CUB domain"/>
    <property type="match status" value="1"/>
</dbReference>
<dbReference type="InterPro" id="IPR000859">
    <property type="entry name" value="CUB_dom"/>
</dbReference>
<dbReference type="InterPro" id="IPR017370">
    <property type="entry name" value="Hatching_enzyme_Uvs2-like"/>
</dbReference>
<dbReference type="InterPro" id="IPR024079">
    <property type="entry name" value="MetalloPept_cat_dom_sf"/>
</dbReference>
<dbReference type="InterPro" id="IPR001506">
    <property type="entry name" value="Peptidase_M12A"/>
</dbReference>
<dbReference type="InterPro" id="IPR006026">
    <property type="entry name" value="Peptidase_Metallo"/>
</dbReference>
<dbReference type="InterPro" id="IPR035914">
    <property type="entry name" value="Sperma_CUB_dom_sf"/>
</dbReference>
<dbReference type="InterPro" id="IPR034039">
    <property type="entry name" value="ZnMP_hatching_enz"/>
</dbReference>
<dbReference type="PANTHER" id="PTHR10127:SF899">
    <property type="entry name" value="ASTACIN-LIKE METALLOENDOPEPTIDASE-RELATED"/>
    <property type="match status" value="1"/>
</dbReference>
<dbReference type="PANTHER" id="PTHR10127">
    <property type="entry name" value="DISCOIDIN, CUB, EGF, LAMININ , AND ZINC METALLOPROTEASE DOMAIN CONTAINING"/>
    <property type="match status" value="1"/>
</dbReference>
<dbReference type="Pfam" id="PF01400">
    <property type="entry name" value="Astacin"/>
    <property type="match status" value="1"/>
</dbReference>
<dbReference type="Pfam" id="PF00431">
    <property type="entry name" value="CUB"/>
    <property type="match status" value="1"/>
</dbReference>
<dbReference type="PIRSF" id="PIRSF038057">
    <property type="entry name" value="Hatching_enzyme_Uvs2"/>
    <property type="match status" value="1"/>
</dbReference>
<dbReference type="PRINTS" id="PR00480">
    <property type="entry name" value="ASTACIN"/>
</dbReference>
<dbReference type="SMART" id="SM00042">
    <property type="entry name" value="CUB"/>
    <property type="match status" value="1"/>
</dbReference>
<dbReference type="SMART" id="SM00235">
    <property type="entry name" value="ZnMc"/>
    <property type="match status" value="1"/>
</dbReference>
<dbReference type="SUPFAM" id="SSF55486">
    <property type="entry name" value="Metalloproteases ('zincins'), catalytic domain"/>
    <property type="match status" value="1"/>
</dbReference>
<dbReference type="SUPFAM" id="SSF49854">
    <property type="entry name" value="Spermadhesin, CUB domain"/>
    <property type="match status" value="1"/>
</dbReference>
<dbReference type="PROSITE" id="PS51864">
    <property type="entry name" value="ASTACIN"/>
    <property type="match status" value="1"/>
</dbReference>
<dbReference type="PROSITE" id="PS01180">
    <property type="entry name" value="CUB"/>
    <property type="match status" value="1"/>
</dbReference>
<keyword id="KW-1003">Cell membrane</keyword>
<keyword id="KW-0963">Cytoplasm</keyword>
<keyword id="KW-0968">Cytoplasmic vesicle</keyword>
<keyword id="KW-1015">Disulfide bond</keyword>
<keyword id="KW-0278">Fertilization</keyword>
<keyword id="KW-0378">Hydrolase</keyword>
<keyword id="KW-0472">Membrane</keyword>
<keyword id="KW-0479">Metal-binding</keyword>
<keyword id="KW-0482">Metalloprotease</keyword>
<keyword id="KW-0645">Protease</keyword>
<keyword id="KW-1185">Reference proteome</keyword>
<keyword id="KW-0732">Signal</keyword>
<keyword id="KW-0862">Zinc</keyword>
<keyword id="KW-0865">Zymogen</keyword>
<gene>
    <name type="primary">ASTL</name>
</gene>
<evidence type="ECO:0000250" key="1"/>
<evidence type="ECO:0000250" key="2">
    <source>
        <dbReference type="UniProtKB" id="Q6HA09"/>
    </source>
</evidence>
<evidence type="ECO:0000255" key="3"/>
<evidence type="ECO:0000255" key="4">
    <source>
        <dbReference type="PROSITE-ProRule" id="PRU00059"/>
    </source>
</evidence>
<evidence type="ECO:0000255" key="5">
    <source>
        <dbReference type="PROSITE-ProRule" id="PRU01211"/>
    </source>
</evidence>
<evidence type="ECO:0000256" key="6">
    <source>
        <dbReference type="SAM" id="MobiDB-lite"/>
    </source>
</evidence>
<evidence type="ECO:0000269" key="7">
    <source>
    </source>
</evidence>
<name>ASTL_CHICK</name>
<organism>
    <name type="scientific">Gallus gallus</name>
    <name type="common">Chicken</name>
    <dbReference type="NCBI Taxonomy" id="9031"/>
    <lineage>
        <taxon>Eukaryota</taxon>
        <taxon>Metazoa</taxon>
        <taxon>Chordata</taxon>
        <taxon>Craniata</taxon>
        <taxon>Vertebrata</taxon>
        <taxon>Euteleostomi</taxon>
        <taxon>Archelosauria</taxon>
        <taxon>Archosauria</taxon>
        <taxon>Dinosauria</taxon>
        <taxon>Saurischia</taxon>
        <taxon>Theropoda</taxon>
        <taxon>Coelurosauria</taxon>
        <taxon>Aves</taxon>
        <taxon>Neognathae</taxon>
        <taxon>Galloanserae</taxon>
        <taxon>Galliformes</taxon>
        <taxon>Phasianidae</taxon>
        <taxon>Phasianinae</taxon>
        <taxon>Gallus</taxon>
    </lineage>
</organism>
<proteinExistence type="evidence at transcript level"/>
<feature type="signal peptide" evidence="3">
    <location>
        <begin position="1"/>
        <end position="19"/>
    </location>
</feature>
<feature type="chain" id="PRO_0000418131" description="Astacin-like metalloendopeptidase">
    <location>
        <begin position="20"/>
        <end position="409"/>
    </location>
</feature>
<feature type="domain" description="Peptidase M12A" evidence="5">
    <location>
        <begin position="87"/>
        <end position="285"/>
    </location>
</feature>
<feature type="domain" description="CUB" evidence="4">
    <location>
        <begin position="287"/>
        <end position="399"/>
    </location>
</feature>
<feature type="region of interest" description="Disordered" evidence="6">
    <location>
        <begin position="30"/>
        <end position="54"/>
    </location>
</feature>
<feature type="compositionally biased region" description="Low complexity" evidence="6">
    <location>
        <begin position="30"/>
        <end position="39"/>
    </location>
</feature>
<feature type="active site" evidence="5">
    <location>
        <position position="184"/>
    </location>
</feature>
<feature type="binding site" evidence="5">
    <location>
        <position position="183"/>
    </location>
    <ligand>
        <name>Zn(2+)</name>
        <dbReference type="ChEBI" id="CHEBI:29105"/>
        <note>catalytic</note>
    </ligand>
</feature>
<feature type="binding site" evidence="5">
    <location>
        <position position="187"/>
    </location>
    <ligand>
        <name>Zn(2+)</name>
        <dbReference type="ChEBI" id="CHEBI:29105"/>
        <note>catalytic</note>
    </ligand>
</feature>
<feature type="binding site" evidence="5">
    <location>
        <position position="193"/>
    </location>
    <ligand>
        <name>Zn(2+)</name>
        <dbReference type="ChEBI" id="CHEBI:29105"/>
        <note>catalytic</note>
    </ligand>
</feature>
<feature type="disulfide bond" evidence="5">
    <location>
        <begin position="91"/>
        <end position="94"/>
    </location>
</feature>
<feature type="disulfide bond" evidence="5">
    <location>
        <begin position="134"/>
        <end position="284"/>
    </location>
</feature>
<feature type="disulfide bond" evidence="5">
    <location>
        <begin position="155"/>
        <end position="175"/>
    </location>
</feature>
<feature type="disulfide bond" evidence="4">
    <location>
        <begin position="287"/>
        <end position="313"/>
    </location>
</feature>
<feature type="disulfide bond" evidence="4">
    <location>
        <begin position="339"/>
        <end position="362"/>
    </location>
</feature>
<sequence length="409" mass="46388">MDLKMLLIFIAFLLPSVLGFPIQDNYENSTATTESTQVTTEEDIYDSPSPAETDSEDELIFNRILEVNKDSSQYLQEGDIVPRRSRSAINCRNCYWPQSRDGIVRIPYVLDPTYEENHVKGIREAMAEFETLTCINFVKRKTERDYLIIRSADGCWSNYGKVGGGQTISVMKGGCMWKGIIQHELDHALGFLHEHSRSDRDKYVRIMWEYISPADRPDFKKFENSNNLGLPYDYSSVMHYGPHTFTNTTGKATIVPVPDGSVHIGQRLGLSNLDVAKINRLYNCSRCSTIIDAAFGSLKSANYPRNYSDNTNCVWLIRTRSRKISLHFRAFELRTTRGCQGDYVKVYDGSSKYSTVLMDKTCGSQIPTDVVSSSNLMLIEFVTDGADTASGFQATFTSAKIQRRFKIRN</sequence>
<comment type="function">
    <text evidence="1">Probable oocyte-specific oolemmal receptor involved in sperm and egg adhesion and fertilization. May act as a protease (By similarity).</text>
</comment>
<comment type="cofactor">
    <cofactor evidence="5">
        <name>Zn(2+)</name>
        <dbReference type="ChEBI" id="CHEBI:29105"/>
    </cofactor>
    <text evidence="5">Binds 1 zinc ion per subunit.</text>
</comment>
<comment type="subcellular location">
    <subcellularLocation>
        <location evidence="2">Cytoplasm</location>
    </subcellularLocation>
    <subcellularLocation>
        <location evidence="2">Cell membrane</location>
    </subcellularLocation>
    <subcellularLocation>
        <location evidence="2">Cytoplasmic vesicle</location>
        <location evidence="2">Secretory vesicle</location>
        <location evidence="2">Cortical granule</location>
    </subcellularLocation>
</comment>
<comment type="tissue specificity">
    <text evidence="7">Expressed in ovary and gonads.</text>
</comment>
<comment type="developmental stage">
    <text evidence="7">Expressed in embryonic stem cells. Expressed in the pluripotent cells of the epiblast. Detected at the junction of non-neuronal and neuronal ectoderm just before neural tube closure. Expressed in the ventral epidermis before ventral closure, in the intermediate mesoderm, gonads and the forming nephric duct and tubules of the mesonephros and metanephros.</text>
</comment>
<accession>P0DJJ2</accession>
<protein>
    <recommendedName>
        <fullName>Astacin-like metalloendopeptidase</fullName>
        <ecNumber>3.4.-.-</ecNumber>
    </recommendedName>
</protein>
<reference key="1">
    <citation type="journal article" date="2004" name="Nature">
        <title>Sequence and comparative analysis of the chicken genome provide unique perspectives on vertebrate evolution.</title>
        <authorList>
            <person name="Hillier L.W."/>
            <person name="Miller W."/>
            <person name="Birney E."/>
            <person name="Warren W."/>
            <person name="Hardison R.C."/>
            <person name="Ponting C.P."/>
            <person name="Bork P."/>
            <person name="Burt D.W."/>
            <person name="Groenen M.A.M."/>
            <person name="Delany M.E."/>
            <person name="Dodgson J.B."/>
            <person name="Chinwalla A.T."/>
            <person name="Cliften P.F."/>
            <person name="Clifton S.W."/>
            <person name="Delehaunty K.D."/>
            <person name="Fronick C."/>
            <person name="Fulton R.S."/>
            <person name="Graves T.A."/>
            <person name="Kremitzki C."/>
            <person name="Layman D."/>
            <person name="Magrini V."/>
            <person name="McPherson J.D."/>
            <person name="Miner T.L."/>
            <person name="Minx P."/>
            <person name="Nash W.E."/>
            <person name="Nhan M.N."/>
            <person name="Nelson J.O."/>
            <person name="Oddy L.G."/>
            <person name="Pohl C.S."/>
            <person name="Randall-Maher J."/>
            <person name="Smith S.M."/>
            <person name="Wallis J.W."/>
            <person name="Yang S.-P."/>
            <person name="Romanov M.N."/>
            <person name="Rondelli C.M."/>
            <person name="Paton B."/>
            <person name="Smith J."/>
            <person name="Morrice D."/>
            <person name="Daniels L."/>
            <person name="Tempest H.G."/>
            <person name="Robertson L."/>
            <person name="Masabanda J.S."/>
            <person name="Griffin D.K."/>
            <person name="Vignal A."/>
            <person name="Fillon V."/>
            <person name="Jacobbson L."/>
            <person name="Kerje S."/>
            <person name="Andersson L."/>
            <person name="Crooijmans R.P."/>
            <person name="Aerts J."/>
            <person name="van der Poel J.J."/>
            <person name="Ellegren H."/>
            <person name="Caldwell R.B."/>
            <person name="Hubbard S.J."/>
            <person name="Grafham D.V."/>
            <person name="Kierzek A.M."/>
            <person name="McLaren S.R."/>
            <person name="Overton I.M."/>
            <person name="Arakawa H."/>
            <person name="Beattie K.J."/>
            <person name="Bezzubov Y."/>
            <person name="Boardman P.E."/>
            <person name="Bonfield J.K."/>
            <person name="Croning M.D.R."/>
            <person name="Davies R.M."/>
            <person name="Francis M.D."/>
            <person name="Humphray S.J."/>
            <person name="Scott C.E."/>
            <person name="Taylor R.G."/>
            <person name="Tickle C."/>
            <person name="Brown W.R.A."/>
            <person name="Rogers J."/>
            <person name="Buerstedde J.-M."/>
            <person name="Wilson S.A."/>
            <person name="Stubbs L."/>
            <person name="Ovcharenko I."/>
            <person name="Gordon L."/>
            <person name="Lucas S."/>
            <person name="Miller M.M."/>
            <person name="Inoko H."/>
            <person name="Shiina T."/>
            <person name="Kaufman J."/>
            <person name="Salomonsen J."/>
            <person name="Skjoedt K."/>
            <person name="Wong G.K.-S."/>
            <person name="Wang J."/>
            <person name="Liu B."/>
            <person name="Wang J."/>
            <person name="Yu J."/>
            <person name="Yang H."/>
            <person name="Nefedov M."/>
            <person name="Koriabine M."/>
            <person name="Dejong P.J."/>
            <person name="Goodstadt L."/>
            <person name="Webber C."/>
            <person name="Dickens N.J."/>
            <person name="Letunic I."/>
            <person name="Suyama M."/>
            <person name="Torrents D."/>
            <person name="von Mering C."/>
            <person name="Zdobnov E.M."/>
            <person name="Makova K."/>
            <person name="Nekrutenko A."/>
            <person name="Elnitski L."/>
            <person name="Eswara P."/>
            <person name="King D.C."/>
            <person name="Yang S.-P."/>
            <person name="Tyekucheva S."/>
            <person name="Radakrishnan A."/>
            <person name="Harris R.S."/>
            <person name="Chiaromonte F."/>
            <person name="Taylor J."/>
            <person name="He J."/>
            <person name="Rijnkels M."/>
            <person name="Griffiths-Jones S."/>
            <person name="Ureta-Vidal A."/>
            <person name="Hoffman M.M."/>
            <person name="Severin J."/>
            <person name="Searle S.M.J."/>
            <person name="Law A.S."/>
            <person name="Speed D."/>
            <person name="Waddington D."/>
            <person name="Cheng Z."/>
            <person name="Tuzun E."/>
            <person name="Eichler E."/>
            <person name="Bao Z."/>
            <person name="Flicek P."/>
            <person name="Shteynberg D.D."/>
            <person name="Brent M.R."/>
            <person name="Bye J.M."/>
            <person name="Huckle E.J."/>
            <person name="Chatterji S."/>
            <person name="Dewey C."/>
            <person name="Pachter L."/>
            <person name="Kouranov A."/>
            <person name="Mourelatos Z."/>
            <person name="Hatzigeorgiou A.G."/>
            <person name="Paterson A.H."/>
            <person name="Ivarie R."/>
            <person name="Brandstrom M."/>
            <person name="Axelsson E."/>
            <person name="Backstrom N."/>
            <person name="Berlin S."/>
            <person name="Webster M.T."/>
            <person name="Pourquie O."/>
            <person name="Reymond A."/>
            <person name="Ucla C."/>
            <person name="Antonarakis S.E."/>
            <person name="Long M."/>
            <person name="Emerson J.J."/>
            <person name="Betran E."/>
            <person name="Dupanloup I."/>
            <person name="Kaessmann H."/>
            <person name="Hinrichs A.S."/>
            <person name="Bejerano G."/>
            <person name="Furey T.S."/>
            <person name="Harte R.A."/>
            <person name="Raney B."/>
            <person name="Siepel A."/>
            <person name="Kent W.J."/>
            <person name="Haussler D."/>
            <person name="Eyras E."/>
            <person name="Castelo R."/>
            <person name="Abril J.F."/>
            <person name="Castellano S."/>
            <person name="Camara F."/>
            <person name="Parra G."/>
            <person name="Guigo R."/>
            <person name="Bourque G."/>
            <person name="Tesler G."/>
            <person name="Pevzner P.A."/>
            <person name="Smit A."/>
            <person name="Fulton L.A."/>
            <person name="Mardis E.R."/>
            <person name="Wilson R.K."/>
        </authorList>
    </citation>
    <scope>NUCLEOTIDE SEQUENCE [LARGE SCALE GENOMIC DNA]</scope>
    <source>
        <strain>Red jungle fowl</strain>
    </source>
</reference>
<reference key="2">
    <citation type="journal article" date="2006" name="Poult. Sci.">
        <title>An expressed sequence tag analysis of the chicken reproductive tract transcriptome.</title>
        <authorList>
            <person name="Froman D.P."/>
            <person name="Kirby J.D."/>
            <person name="Rhoads D.D."/>
        </authorList>
    </citation>
    <scope>NUCLEOTIDE SEQUENCE [LARGE SCALE MRNA] OF 1-40</scope>
</reference>
<reference key="3">
    <citation type="journal article" date="2002" name="Curr. Biol.">
        <title>A comprehensive collection of chicken cDNAs.</title>
        <authorList>
            <person name="Boardman P.E."/>
            <person name="Sanz-Ezquerro J."/>
            <person name="Overton I.M."/>
            <person name="Burt D.W."/>
            <person name="Bosch E."/>
            <person name="Fong W.T."/>
            <person name="Tickle C."/>
            <person name="Brown W.R."/>
            <person name="Wilson S.A."/>
            <person name="Hubbard S.J."/>
        </authorList>
    </citation>
    <scope>NUCLEOTIDE SEQUENCE [LARGE SCALE MRNA] OF 213-409</scope>
    <source>
        <strain>White Leghorn Hisex</strain>
    </source>
</reference>
<reference key="4">
    <citation type="journal article" date="2012" name="Dev. Dyn.">
        <title>Astacin-like metallo-endopeptidase is dynamically expressed in embryonic stem cells and embryonic epithelium during morphogenesis.</title>
        <authorList>
            <person name="Acloque H."/>
            <person name="Lavial F."/>
            <person name="Pain B."/>
        </authorList>
    </citation>
    <scope>TISSUE SPECIFICITY</scope>
    <scope>DEVELOPMENTAL STAGE</scope>
</reference>